<dbReference type="EC" id="2.3.1.181" evidence="1"/>
<dbReference type="EMBL" id="CP000148">
    <property type="protein sequence ID" value="ABB32965.1"/>
    <property type="molecule type" value="Genomic_DNA"/>
</dbReference>
<dbReference type="RefSeq" id="WP_004511712.1">
    <property type="nucleotide sequence ID" value="NC_007517.1"/>
</dbReference>
<dbReference type="SMR" id="Q39S09"/>
<dbReference type="STRING" id="269799.Gmet_2747"/>
<dbReference type="KEGG" id="gme:Gmet_2747"/>
<dbReference type="eggNOG" id="COG0321">
    <property type="taxonomic scope" value="Bacteria"/>
</dbReference>
<dbReference type="HOGENOM" id="CLU_035168_1_3_7"/>
<dbReference type="UniPathway" id="UPA00538">
    <property type="reaction ID" value="UER00592"/>
</dbReference>
<dbReference type="Proteomes" id="UP000007073">
    <property type="component" value="Chromosome"/>
</dbReference>
<dbReference type="GO" id="GO:0005737">
    <property type="term" value="C:cytoplasm"/>
    <property type="evidence" value="ECO:0007669"/>
    <property type="project" value="UniProtKB-SubCell"/>
</dbReference>
<dbReference type="GO" id="GO:0033819">
    <property type="term" value="F:lipoyl(octanoyl) transferase activity"/>
    <property type="evidence" value="ECO:0007669"/>
    <property type="project" value="UniProtKB-EC"/>
</dbReference>
<dbReference type="GO" id="GO:0036211">
    <property type="term" value="P:protein modification process"/>
    <property type="evidence" value="ECO:0007669"/>
    <property type="project" value="InterPro"/>
</dbReference>
<dbReference type="CDD" id="cd16444">
    <property type="entry name" value="LipB"/>
    <property type="match status" value="1"/>
</dbReference>
<dbReference type="Gene3D" id="3.30.930.10">
    <property type="entry name" value="Bira Bifunctional Protein, Domain 2"/>
    <property type="match status" value="1"/>
</dbReference>
<dbReference type="HAMAP" id="MF_00013">
    <property type="entry name" value="LipB"/>
    <property type="match status" value="1"/>
</dbReference>
<dbReference type="InterPro" id="IPR045864">
    <property type="entry name" value="aa-tRNA-synth_II/BPL/LPL"/>
</dbReference>
<dbReference type="InterPro" id="IPR004143">
    <property type="entry name" value="BPL_LPL_catalytic"/>
</dbReference>
<dbReference type="InterPro" id="IPR000544">
    <property type="entry name" value="Octanoyltransferase"/>
</dbReference>
<dbReference type="InterPro" id="IPR020605">
    <property type="entry name" value="Octanoyltransferase_CS"/>
</dbReference>
<dbReference type="NCBIfam" id="TIGR00214">
    <property type="entry name" value="lipB"/>
    <property type="match status" value="1"/>
</dbReference>
<dbReference type="NCBIfam" id="NF010925">
    <property type="entry name" value="PRK14345.1"/>
    <property type="match status" value="1"/>
</dbReference>
<dbReference type="PANTHER" id="PTHR10993:SF7">
    <property type="entry name" value="LIPOYLTRANSFERASE 2, MITOCHONDRIAL-RELATED"/>
    <property type="match status" value="1"/>
</dbReference>
<dbReference type="PANTHER" id="PTHR10993">
    <property type="entry name" value="OCTANOYLTRANSFERASE"/>
    <property type="match status" value="1"/>
</dbReference>
<dbReference type="Pfam" id="PF21948">
    <property type="entry name" value="LplA-B_cat"/>
    <property type="match status" value="1"/>
</dbReference>
<dbReference type="PIRSF" id="PIRSF016262">
    <property type="entry name" value="LPLase"/>
    <property type="match status" value="1"/>
</dbReference>
<dbReference type="SUPFAM" id="SSF55681">
    <property type="entry name" value="Class II aaRS and biotin synthetases"/>
    <property type="match status" value="1"/>
</dbReference>
<dbReference type="PROSITE" id="PS51733">
    <property type="entry name" value="BPL_LPL_CATALYTIC"/>
    <property type="match status" value="1"/>
</dbReference>
<dbReference type="PROSITE" id="PS01313">
    <property type="entry name" value="LIPB"/>
    <property type="match status" value="1"/>
</dbReference>
<keyword id="KW-0012">Acyltransferase</keyword>
<keyword id="KW-0963">Cytoplasm</keyword>
<keyword id="KW-1185">Reference proteome</keyword>
<keyword id="KW-0808">Transferase</keyword>
<gene>
    <name evidence="1" type="primary">lipB</name>
    <name type="ordered locus">Gmet_2747</name>
</gene>
<reference key="1">
    <citation type="journal article" date="2009" name="BMC Microbiol.">
        <title>The genome sequence of Geobacter metallireducens: features of metabolism, physiology and regulation common and dissimilar to Geobacter sulfurreducens.</title>
        <authorList>
            <person name="Aklujkar M."/>
            <person name="Krushkal J."/>
            <person name="DiBartolo G."/>
            <person name="Lapidus A."/>
            <person name="Land M.L."/>
            <person name="Lovley D.R."/>
        </authorList>
    </citation>
    <scope>NUCLEOTIDE SEQUENCE [LARGE SCALE GENOMIC DNA]</scope>
    <source>
        <strain>ATCC 53774 / DSM 7210 / GS-15</strain>
    </source>
</reference>
<sequence length="213" mass="22962">MMIRDLGKLEFEAALAIQEQLAAGVAAGTSPETLLLLEHPPVYTIGRGGCRENVLDPGIRVVEANRGGDVTFHGPGQLVGYPVIDLGRRGRDLHRYLRILEELLINVAAEFGVAARREPGRTGIWTDGGKLASIGVGVRRWVTMHGFALNVTNELAPFRSINPCGIVACPITSLSAILGRPVPLGDVRRSVAGRFPFLLDERLPFLETAEPAP</sequence>
<feature type="chain" id="PRO_0000242725" description="Octanoyltransferase">
    <location>
        <begin position="1"/>
        <end position="213"/>
    </location>
</feature>
<feature type="domain" description="BPL/LPL catalytic" evidence="2">
    <location>
        <begin position="28"/>
        <end position="203"/>
    </location>
</feature>
<feature type="active site" description="Acyl-thioester intermediate" evidence="1">
    <location>
        <position position="164"/>
    </location>
</feature>
<feature type="binding site" evidence="1">
    <location>
        <begin position="66"/>
        <end position="73"/>
    </location>
    <ligand>
        <name>substrate</name>
    </ligand>
</feature>
<feature type="binding site" evidence="1">
    <location>
        <begin position="133"/>
        <end position="135"/>
    </location>
    <ligand>
        <name>substrate</name>
    </ligand>
</feature>
<feature type="binding site" evidence="1">
    <location>
        <begin position="146"/>
        <end position="148"/>
    </location>
    <ligand>
        <name>substrate</name>
    </ligand>
</feature>
<feature type="site" description="Lowers pKa of active site Cys" evidence="1">
    <location>
        <position position="130"/>
    </location>
</feature>
<proteinExistence type="inferred from homology"/>
<evidence type="ECO:0000255" key="1">
    <source>
        <dbReference type="HAMAP-Rule" id="MF_00013"/>
    </source>
</evidence>
<evidence type="ECO:0000255" key="2">
    <source>
        <dbReference type="PROSITE-ProRule" id="PRU01067"/>
    </source>
</evidence>
<protein>
    <recommendedName>
        <fullName evidence="1">Octanoyltransferase</fullName>
        <ecNumber evidence="1">2.3.1.181</ecNumber>
    </recommendedName>
    <alternativeName>
        <fullName evidence="1">Lipoate-protein ligase B</fullName>
    </alternativeName>
    <alternativeName>
        <fullName evidence="1">Lipoyl/octanoyl transferase</fullName>
    </alternativeName>
    <alternativeName>
        <fullName evidence="1">Octanoyl-[acyl-carrier-protein]-protein N-octanoyltransferase</fullName>
    </alternativeName>
</protein>
<organism>
    <name type="scientific">Geobacter metallireducens (strain ATCC 53774 / DSM 7210 / GS-15)</name>
    <dbReference type="NCBI Taxonomy" id="269799"/>
    <lineage>
        <taxon>Bacteria</taxon>
        <taxon>Pseudomonadati</taxon>
        <taxon>Thermodesulfobacteriota</taxon>
        <taxon>Desulfuromonadia</taxon>
        <taxon>Geobacterales</taxon>
        <taxon>Geobacteraceae</taxon>
        <taxon>Geobacter</taxon>
    </lineage>
</organism>
<name>LIPB_GEOMG</name>
<comment type="function">
    <text evidence="1">Catalyzes the transfer of endogenously produced octanoic acid from octanoyl-acyl-carrier-protein onto the lipoyl domains of lipoate-dependent enzymes. Lipoyl-ACP can also act as a substrate although octanoyl-ACP is likely to be the physiological substrate.</text>
</comment>
<comment type="catalytic activity">
    <reaction evidence="1">
        <text>octanoyl-[ACP] + L-lysyl-[protein] = N(6)-octanoyl-L-lysyl-[protein] + holo-[ACP] + H(+)</text>
        <dbReference type="Rhea" id="RHEA:17665"/>
        <dbReference type="Rhea" id="RHEA-COMP:9636"/>
        <dbReference type="Rhea" id="RHEA-COMP:9685"/>
        <dbReference type="Rhea" id="RHEA-COMP:9752"/>
        <dbReference type="Rhea" id="RHEA-COMP:9928"/>
        <dbReference type="ChEBI" id="CHEBI:15378"/>
        <dbReference type="ChEBI" id="CHEBI:29969"/>
        <dbReference type="ChEBI" id="CHEBI:64479"/>
        <dbReference type="ChEBI" id="CHEBI:78463"/>
        <dbReference type="ChEBI" id="CHEBI:78809"/>
        <dbReference type="EC" id="2.3.1.181"/>
    </reaction>
</comment>
<comment type="pathway">
    <text evidence="1">Protein modification; protein lipoylation via endogenous pathway; protein N(6)-(lipoyl)lysine from octanoyl-[acyl-carrier-protein]: step 1/2.</text>
</comment>
<comment type="subcellular location">
    <subcellularLocation>
        <location evidence="1">Cytoplasm</location>
    </subcellularLocation>
</comment>
<comment type="miscellaneous">
    <text evidence="1">In the reaction, the free carboxyl group of octanoic acid is attached via an amide linkage to the epsilon-amino group of a specific lysine residue of lipoyl domains of lipoate-dependent enzymes.</text>
</comment>
<comment type="similarity">
    <text evidence="1">Belongs to the LipB family.</text>
</comment>
<accession>Q39S09</accession>